<sequence length="230" mass="25763">MKKKGLNFLMQVAIDGPASAGKSTVAKIIAHNLGYIYIDTGAMYRACTLIAHDNHVDYGDEKAILDLVDKSTIEFKQEDGEQKVYVNGKDVSIAIRTPEITENVSQVSALKSIREKMVELQREMAGKHDVIMDGRDIGTTVLPDAEVKIFLIASVASRAKRRFLDFQEKGIHQDLKDIEHDIEVRDYKDSHREISPLKKAADAIELDTTNLTIDEVVAKISEIIQKKQKN</sequence>
<name>KCY_LACGA</name>
<accession>Q043U2</accession>
<proteinExistence type="inferred from homology"/>
<keyword id="KW-0067">ATP-binding</keyword>
<keyword id="KW-0963">Cytoplasm</keyword>
<keyword id="KW-0418">Kinase</keyword>
<keyword id="KW-0547">Nucleotide-binding</keyword>
<keyword id="KW-0808">Transferase</keyword>
<protein>
    <recommendedName>
        <fullName evidence="1">Cytidylate kinase</fullName>
        <shortName evidence="1">CK</shortName>
        <ecNumber evidence="1">2.7.4.25</ecNumber>
    </recommendedName>
    <alternativeName>
        <fullName evidence="1">Cytidine monophosphate kinase</fullName>
        <shortName evidence="1">CMP kinase</shortName>
    </alternativeName>
</protein>
<organism>
    <name type="scientific">Lactobacillus gasseri (strain ATCC 33323 / DSM 20243 / BCRC 14619 / CIP 102991 / JCM 1131 / KCTC 3163 / NCIMB 11718 / NCTC 13722 / AM63)</name>
    <dbReference type="NCBI Taxonomy" id="324831"/>
    <lineage>
        <taxon>Bacteria</taxon>
        <taxon>Bacillati</taxon>
        <taxon>Bacillota</taxon>
        <taxon>Bacilli</taxon>
        <taxon>Lactobacillales</taxon>
        <taxon>Lactobacillaceae</taxon>
        <taxon>Lactobacillus</taxon>
    </lineage>
</organism>
<comment type="catalytic activity">
    <reaction evidence="1">
        <text>CMP + ATP = CDP + ADP</text>
        <dbReference type="Rhea" id="RHEA:11600"/>
        <dbReference type="ChEBI" id="CHEBI:30616"/>
        <dbReference type="ChEBI" id="CHEBI:58069"/>
        <dbReference type="ChEBI" id="CHEBI:60377"/>
        <dbReference type="ChEBI" id="CHEBI:456216"/>
        <dbReference type="EC" id="2.7.4.25"/>
    </reaction>
</comment>
<comment type="catalytic activity">
    <reaction evidence="1">
        <text>dCMP + ATP = dCDP + ADP</text>
        <dbReference type="Rhea" id="RHEA:25094"/>
        <dbReference type="ChEBI" id="CHEBI:30616"/>
        <dbReference type="ChEBI" id="CHEBI:57566"/>
        <dbReference type="ChEBI" id="CHEBI:58593"/>
        <dbReference type="ChEBI" id="CHEBI:456216"/>
        <dbReference type="EC" id="2.7.4.25"/>
    </reaction>
</comment>
<comment type="subcellular location">
    <subcellularLocation>
        <location evidence="1">Cytoplasm</location>
    </subcellularLocation>
</comment>
<comment type="similarity">
    <text evidence="1">Belongs to the cytidylate kinase family. Type 1 subfamily.</text>
</comment>
<evidence type="ECO:0000255" key="1">
    <source>
        <dbReference type="HAMAP-Rule" id="MF_00238"/>
    </source>
</evidence>
<feature type="chain" id="PRO_1000048225" description="Cytidylate kinase">
    <location>
        <begin position="1"/>
        <end position="230"/>
    </location>
</feature>
<feature type="binding site" evidence="1">
    <location>
        <begin position="16"/>
        <end position="24"/>
    </location>
    <ligand>
        <name>ATP</name>
        <dbReference type="ChEBI" id="CHEBI:30616"/>
    </ligand>
</feature>
<reference key="1">
    <citation type="journal article" date="2006" name="Proc. Natl. Acad. Sci. U.S.A.">
        <title>Comparative genomics of the lactic acid bacteria.</title>
        <authorList>
            <person name="Makarova K.S."/>
            <person name="Slesarev A."/>
            <person name="Wolf Y.I."/>
            <person name="Sorokin A."/>
            <person name="Mirkin B."/>
            <person name="Koonin E.V."/>
            <person name="Pavlov A."/>
            <person name="Pavlova N."/>
            <person name="Karamychev V."/>
            <person name="Polouchine N."/>
            <person name="Shakhova V."/>
            <person name="Grigoriev I."/>
            <person name="Lou Y."/>
            <person name="Rohksar D."/>
            <person name="Lucas S."/>
            <person name="Huang K."/>
            <person name="Goodstein D.M."/>
            <person name="Hawkins T."/>
            <person name="Plengvidhya V."/>
            <person name="Welker D."/>
            <person name="Hughes J."/>
            <person name="Goh Y."/>
            <person name="Benson A."/>
            <person name="Baldwin K."/>
            <person name="Lee J.-H."/>
            <person name="Diaz-Muniz I."/>
            <person name="Dosti B."/>
            <person name="Smeianov V."/>
            <person name="Wechter W."/>
            <person name="Barabote R."/>
            <person name="Lorca G."/>
            <person name="Altermann E."/>
            <person name="Barrangou R."/>
            <person name="Ganesan B."/>
            <person name="Xie Y."/>
            <person name="Rawsthorne H."/>
            <person name="Tamir D."/>
            <person name="Parker C."/>
            <person name="Breidt F."/>
            <person name="Broadbent J.R."/>
            <person name="Hutkins R."/>
            <person name="O'Sullivan D."/>
            <person name="Steele J."/>
            <person name="Unlu G."/>
            <person name="Saier M.H. Jr."/>
            <person name="Klaenhammer T."/>
            <person name="Richardson P."/>
            <person name="Kozyavkin S."/>
            <person name="Weimer B.C."/>
            <person name="Mills D.A."/>
        </authorList>
    </citation>
    <scope>NUCLEOTIDE SEQUENCE [LARGE SCALE GENOMIC DNA]</scope>
    <source>
        <strain>ATCC 33323 / DSM 20243 / BCRC 14619 / CIP 102991 / JCM 1131 / KCTC 3163 / NCIMB 11718 / NCTC 13722 / AM63</strain>
    </source>
</reference>
<gene>
    <name evidence="1" type="primary">cmk</name>
    <name type="ordered locus">LGAS_0891</name>
</gene>
<dbReference type="EC" id="2.7.4.25" evidence="1"/>
<dbReference type="EMBL" id="CP000413">
    <property type="protein sequence ID" value="ABJ60280.1"/>
    <property type="molecule type" value="Genomic_DNA"/>
</dbReference>
<dbReference type="SMR" id="Q043U2"/>
<dbReference type="KEGG" id="lga:LGAS_0891"/>
<dbReference type="HOGENOM" id="CLU_079959_0_2_9"/>
<dbReference type="BioCyc" id="LGAS324831:G1G6Y-885-MONOMER"/>
<dbReference type="Proteomes" id="UP000000664">
    <property type="component" value="Chromosome"/>
</dbReference>
<dbReference type="GO" id="GO:0005829">
    <property type="term" value="C:cytosol"/>
    <property type="evidence" value="ECO:0007669"/>
    <property type="project" value="TreeGrafter"/>
</dbReference>
<dbReference type="GO" id="GO:0005524">
    <property type="term" value="F:ATP binding"/>
    <property type="evidence" value="ECO:0007669"/>
    <property type="project" value="UniProtKB-UniRule"/>
</dbReference>
<dbReference type="GO" id="GO:0036430">
    <property type="term" value="F:CMP kinase activity"/>
    <property type="evidence" value="ECO:0007669"/>
    <property type="project" value="RHEA"/>
</dbReference>
<dbReference type="GO" id="GO:0036431">
    <property type="term" value="F:dCMP kinase activity"/>
    <property type="evidence" value="ECO:0007669"/>
    <property type="project" value="RHEA"/>
</dbReference>
<dbReference type="GO" id="GO:0015949">
    <property type="term" value="P:nucleobase-containing small molecule interconversion"/>
    <property type="evidence" value="ECO:0007669"/>
    <property type="project" value="TreeGrafter"/>
</dbReference>
<dbReference type="GO" id="GO:0006220">
    <property type="term" value="P:pyrimidine nucleotide metabolic process"/>
    <property type="evidence" value="ECO:0007669"/>
    <property type="project" value="UniProtKB-UniRule"/>
</dbReference>
<dbReference type="CDD" id="cd02020">
    <property type="entry name" value="CMPK"/>
    <property type="match status" value="1"/>
</dbReference>
<dbReference type="Gene3D" id="3.40.50.300">
    <property type="entry name" value="P-loop containing nucleotide triphosphate hydrolases"/>
    <property type="match status" value="1"/>
</dbReference>
<dbReference type="HAMAP" id="MF_00238">
    <property type="entry name" value="Cytidyl_kinase_type1"/>
    <property type="match status" value="1"/>
</dbReference>
<dbReference type="InterPro" id="IPR003136">
    <property type="entry name" value="Cytidylate_kin"/>
</dbReference>
<dbReference type="InterPro" id="IPR011994">
    <property type="entry name" value="Cytidylate_kinase_dom"/>
</dbReference>
<dbReference type="InterPro" id="IPR027417">
    <property type="entry name" value="P-loop_NTPase"/>
</dbReference>
<dbReference type="NCBIfam" id="TIGR00017">
    <property type="entry name" value="cmk"/>
    <property type="match status" value="1"/>
</dbReference>
<dbReference type="PANTHER" id="PTHR21299:SF2">
    <property type="entry name" value="CYTIDYLATE KINASE"/>
    <property type="match status" value="1"/>
</dbReference>
<dbReference type="PANTHER" id="PTHR21299">
    <property type="entry name" value="CYTIDYLATE KINASE/PANTOATE-BETA-ALANINE LIGASE"/>
    <property type="match status" value="1"/>
</dbReference>
<dbReference type="Pfam" id="PF02224">
    <property type="entry name" value="Cytidylate_kin"/>
    <property type="match status" value="1"/>
</dbReference>
<dbReference type="SUPFAM" id="SSF52540">
    <property type="entry name" value="P-loop containing nucleoside triphosphate hydrolases"/>
    <property type="match status" value="1"/>
</dbReference>